<dbReference type="EC" id="2.7.7.38" evidence="1"/>
<dbReference type="EMBL" id="CP001068">
    <property type="protein sequence ID" value="ACD27933.1"/>
    <property type="molecule type" value="Genomic_DNA"/>
</dbReference>
<dbReference type="SMR" id="B2UB84"/>
<dbReference type="STRING" id="402626.Rpic_2809"/>
<dbReference type="KEGG" id="rpi:Rpic_2809"/>
<dbReference type="eggNOG" id="COG1212">
    <property type="taxonomic scope" value="Bacteria"/>
</dbReference>
<dbReference type="HOGENOM" id="CLU_065038_1_0_4"/>
<dbReference type="UniPathway" id="UPA00030"/>
<dbReference type="UniPathway" id="UPA00358">
    <property type="reaction ID" value="UER00476"/>
</dbReference>
<dbReference type="GO" id="GO:0005829">
    <property type="term" value="C:cytosol"/>
    <property type="evidence" value="ECO:0007669"/>
    <property type="project" value="TreeGrafter"/>
</dbReference>
<dbReference type="GO" id="GO:0008690">
    <property type="term" value="F:3-deoxy-manno-octulosonate cytidylyltransferase activity"/>
    <property type="evidence" value="ECO:0007669"/>
    <property type="project" value="UniProtKB-UniRule"/>
</dbReference>
<dbReference type="GO" id="GO:0033468">
    <property type="term" value="P:CMP-keto-3-deoxy-D-manno-octulosonic acid biosynthetic process"/>
    <property type="evidence" value="ECO:0007669"/>
    <property type="project" value="UniProtKB-UniRule"/>
</dbReference>
<dbReference type="GO" id="GO:0009103">
    <property type="term" value="P:lipopolysaccharide biosynthetic process"/>
    <property type="evidence" value="ECO:0007669"/>
    <property type="project" value="UniProtKB-UniRule"/>
</dbReference>
<dbReference type="CDD" id="cd02517">
    <property type="entry name" value="CMP-KDO-Synthetase"/>
    <property type="match status" value="1"/>
</dbReference>
<dbReference type="FunFam" id="3.90.550.10:FF:000011">
    <property type="entry name" value="3-deoxy-manno-octulosonate cytidylyltransferase"/>
    <property type="match status" value="1"/>
</dbReference>
<dbReference type="Gene3D" id="3.90.550.10">
    <property type="entry name" value="Spore Coat Polysaccharide Biosynthesis Protein SpsA, Chain A"/>
    <property type="match status" value="1"/>
</dbReference>
<dbReference type="HAMAP" id="MF_00057">
    <property type="entry name" value="KdsB"/>
    <property type="match status" value="1"/>
</dbReference>
<dbReference type="InterPro" id="IPR003329">
    <property type="entry name" value="Cytidylyl_trans"/>
</dbReference>
<dbReference type="InterPro" id="IPR004528">
    <property type="entry name" value="KdsB"/>
</dbReference>
<dbReference type="InterPro" id="IPR029044">
    <property type="entry name" value="Nucleotide-diphossugar_trans"/>
</dbReference>
<dbReference type="NCBIfam" id="TIGR00466">
    <property type="entry name" value="kdsB"/>
    <property type="match status" value="1"/>
</dbReference>
<dbReference type="NCBIfam" id="NF003952">
    <property type="entry name" value="PRK05450.1-5"/>
    <property type="match status" value="1"/>
</dbReference>
<dbReference type="NCBIfam" id="NF009905">
    <property type="entry name" value="PRK13368.1"/>
    <property type="match status" value="1"/>
</dbReference>
<dbReference type="PANTHER" id="PTHR42866">
    <property type="entry name" value="3-DEOXY-MANNO-OCTULOSONATE CYTIDYLYLTRANSFERASE"/>
    <property type="match status" value="1"/>
</dbReference>
<dbReference type="PANTHER" id="PTHR42866:SF2">
    <property type="entry name" value="3-DEOXY-MANNO-OCTULOSONATE CYTIDYLYLTRANSFERASE, MITOCHONDRIAL"/>
    <property type="match status" value="1"/>
</dbReference>
<dbReference type="Pfam" id="PF02348">
    <property type="entry name" value="CTP_transf_3"/>
    <property type="match status" value="1"/>
</dbReference>
<dbReference type="SUPFAM" id="SSF53448">
    <property type="entry name" value="Nucleotide-diphospho-sugar transferases"/>
    <property type="match status" value="1"/>
</dbReference>
<accession>B2UB84</accession>
<comment type="function">
    <text evidence="1">Activates KDO (a required 8-carbon sugar) for incorporation into bacterial lipopolysaccharide in Gram-negative bacteria.</text>
</comment>
<comment type="catalytic activity">
    <reaction evidence="1">
        <text>3-deoxy-alpha-D-manno-oct-2-ulosonate + CTP = CMP-3-deoxy-beta-D-manno-octulosonate + diphosphate</text>
        <dbReference type="Rhea" id="RHEA:23448"/>
        <dbReference type="ChEBI" id="CHEBI:33019"/>
        <dbReference type="ChEBI" id="CHEBI:37563"/>
        <dbReference type="ChEBI" id="CHEBI:85986"/>
        <dbReference type="ChEBI" id="CHEBI:85987"/>
        <dbReference type="EC" id="2.7.7.38"/>
    </reaction>
</comment>
<comment type="pathway">
    <text evidence="1">Nucleotide-sugar biosynthesis; CMP-3-deoxy-D-manno-octulosonate biosynthesis; CMP-3-deoxy-D-manno-octulosonate from 3-deoxy-D-manno-octulosonate and CTP: step 1/1.</text>
</comment>
<comment type="pathway">
    <text evidence="1">Bacterial outer membrane biogenesis; lipopolysaccharide biosynthesis.</text>
</comment>
<comment type="subcellular location">
    <subcellularLocation>
        <location evidence="1">Cytoplasm</location>
    </subcellularLocation>
</comment>
<comment type="similarity">
    <text evidence="1">Belongs to the KdsB family.</text>
</comment>
<name>KDSB_RALPJ</name>
<reference key="1">
    <citation type="submission" date="2008-05" db="EMBL/GenBank/DDBJ databases">
        <title>Complete sequence of chromosome 1 of Ralstonia pickettii 12J.</title>
        <authorList>
            <person name="Lucas S."/>
            <person name="Copeland A."/>
            <person name="Lapidus A."/>
            <person name="Glavina del Rio T."/>
            <person name="Dalin E."/>
            <person name="Tice H."/>
            <person name="Bruce D."/>
            <person name="Goodwin L."/>
            <person name="Pitluck S."/>
            <person name="Meincke L."/>
            <person name="Brettin T."/>
            <person name="Detter J.C."/>
            <person name="Han C."/>
            <person name="Kuske C.R."/>
            <person name="Schmutz J."/>
            <person name="Larimer F."/>
            <person name="Land M."/>
            <person name="Hauser L."/>
            <person name="Kyrpides N."/>
            <person name="Mikhailova N."/>
            <person name="Marsh T."/>
            <person name="Richardson P."/>
        </authorList>
    </citation>
    <scope>NUCLEOTIDE SEQUENCE [LARGE SCALE GENOMIC DNA]</scope>
    <source>
        <strain>12J</strain>
    </source>
</reference>
<feature type="chain" id="PRO_0000370127" description="3-deoxy-manno-octulosonate cytidylyltransferase">
    <location>
        <begin position="1"/>
        <end position="268"/>
    </location>
</feature>
<sequence>MSHAPFIAVIPARLASTRLPNKPLADIDGKPMVVRVAERAHQSSAARVVVATDAASVADACMQHHVEAVLTRADHASGTDRLAEVATVLGLPDDAIVVNVQGDEPLIAPTLIDNVAAHLRDHPDCAIATAAHPIHDPADVFNPNVVKVVLDAADRALLFSRAPLPWARDTWTPAVMAGSVAERPLPAMPVLRHIGIYAYRAGFLRRFPQLAAAPIEQTEQLEQLRAMWHGERIAVLTTDDAPAAGVDTPEDLTRVRAAWAELLAQDGP</sequence>
<proteinExistence type="inferred from homology"/>
<keyword id="KW-0963">Cytoplasm</keyword>
<keyword id="KW-0448">Lipopolysaccharide biosynthesis</keyword>
<keyword id="KW-0548">Nucleotidyltransferase</keyword>
<keyword id="KW-0808">Transferase</keyword>
<gene>
    <name evidence="1" type="primary">kdsB</name>
    <name type="ordered locus">Rpic_2809</name>
</gene>
<protein>
    <recommendedName>
        <fullName evidence="1">3-deoxy-manno-octulosonate cytidylyltransferase</fullName>
        <ecNumber evidence="1">2.7.7.38</ecNumber>
    </recommendedName>
    <alternativeName>
        <fullName evidence="1">CMP-2-keto-3-deoxyoctulosonic acid synthase</fullName>
        <shortName evidence="1">CKS</shortName>
        <shortName evidence="1">CMP-KDO synthase</shortName>
    </alternativeName>
</protein>
<evidence type="ECO:0000255" key="1">
    <source>
        <dbReference type="HAMAP-Rule" id="MF_00057"/>
    </source>
</evidence>
<organism>
    <name type="scientific">Ralstonia pickettii (strain 12J)</name>
    <dbReference type="NCBI Taxonomy" id="402626"/>
    <lineage>
        <taxon>Bacteria</taxon>
        <taxon>Pseudomonadati</taxon>
        <taxon>Pseudomonadota</taxon>
        <taxon>Betaproteobacteria</taxon>
        <taxon>Burkholderiales</taxon>
        <taxon>Burkholderiaceae</taxon>
        <taxon>Ralstonia</taxon>
    </lineage>
</organism>